<accession>Q58901</accession>
<feature type="chain" id="PRO_0000107381" description="Uncharacterized protein MJ1506">
    <location>
        <begin position="1"/>
        <end position="437"/>
    </location>
</feature>
<feature type="transmembrane region" description="Helical" evidence="1">
    <location>
        <begin position="47"/>
        <end position="67"/>
    </location>
</feature>
<reference key="1">
    <citation type="journal article" date="1996" name="Science">
        <title>Complete genome sequence of the methanogenic archaeon, Methanococcus jannaschii.</title>
        <authorList>
            <person name="Bult C.J."/>
            <person name="White O."/>
            <person name="Olsen G.J."/>
            <person name="Zhou L."/>
            <person name="Fleischmann R.D."/>
            <person name="Sutton G.G."/>
            <person name="Blake J.A."/>
            <person name="FitzGerald L.M."/>
            <person name="Clayton R.A."/>
            <person name="Gocayne J.D."/>
            <person name="Kerlavage A.R."/>
            <person name="Dougherty B.A."/>
            <person name="Tomb J.-F."/>
            <person name="Adams M.D."/>
            <person name="Reich C.I."/>
            <person name="Overbeek R."/>
            <person name="Kirkness E.F."/>
            <person name="Weinstock K.G."/>
            <person name="Merrick J.M."/>
            <person name="Glodek A."/>
            <person name="Scott J.L."/>
            <person name="Geoghagen N.S.M."/>
            <person name="Weidman J.F."/>
            <person name="Fuhrmann J.L."/>
            <person name="Nguyen D."/>
            <person name="Utterback T.R."/>
            <person name="Kelley J.M."/>
            <person name="Peterson J.D."/>
            <person name="Sadow P.W."/>
            <person name="Hanna M.C."/>
            <person name="Cotton M.D."/>
            <person name="Roberts K.M."/>
            <person name="Hurst M.A."/>
            <person name="Kaine B.P."/>
            <person name="Borodovsky M."/>
            <person name="Klenk H.-P."/>
            <person name="Fraser C.M."/>
            <person name="Smith H.O."/>
            <person name="Woese C.R."/>
            <person name="Venter J.C."/>
        </authorList>
    </citation>
    <scope>NUCLEOTIDE SEQUENCE [LARGE SCALE GENOMIC DNA]</scope>
    <source>
        <strain>ATCC 43067 / DSM 2661 / JAL-1 / JCM 10045 / NBRC 100440</strain>
    </source>
</reference>
<comment type="subcellular location">
    <subcellularLocation>
        <location evidence="2">Membrane</location>
        <topology evidence="2">Single-pass membrane protein</topology>
    </subcellularLocation>
</comment>
<name>Y1506_METJA</name>
<keyword id="KW-0472">Membrane</keyword>
<keyword id="KW-1185">Reference proteome</keyword>
<keyword id="KW-0812">Transmembrane</keyword>
<keyword id="KW-1133">Transmembrane helix</keyword>
<protein>
    <recommendedName>
        <fullName>Uncharacterized protein MJ1506</fullName>
    </recommendedName>
</protein>
<proteinExistence type="predicted"/>
<gene>
    <name type="ordered locus">MJ1506</name>
</gene>
<evidence type="ECO:0000255" key="1"/>
<evidence type="ECO:0000305" key="2"/>
<dbReference type="EMBL" id="L77117">
    <property type="protein sequence ID" value="AAB99522.1"/>
    <property type="molecule type" value="Genomic_DNA"/>
</dbReference>
<dbReference type="PIR" id="A64488">
    <property type="entry name" value="A64488"/>
</dbReference>
<dbReference type="STRING" id="243232.MJ_1506"/>
<dbReference type="PaxDb" id="243232-MJ_1506"/>
<dbReference type="EnsemblBacteria" id="AAB99522">
    <property type="protein sequence ID" value="AAB99522"/>
    <property type="gene ID" value="MJ_1506"/>
</dbReference>
<dbReference type="KEGG" id="mja:MJ_1506"/>
<dbReference type="eggNOG" id="arCOG02080">
    <property type="taxonomic scope" value="Archaea"/>
</dbReference>
<dbReference type="HOGENOM" id="CLU_036466_0_0_2"/>
<dbReference type="InParanoid" id="Q58901"/>
<dbReference type="OrthoDB" id="56770at2157"/>
<dbReference type="PhylomeDB" id="Q58901"/>
<dbReference type="Proteomes" id="UP000000805">
    <property type="component" value="Chromosome"/>
</dbReference>
<dbReference type="GO" id="GO:0016020">
    <property type="term" value="C:membrane"/>
    <property type="evidence" value="ECO:0007669"/>
    <property type="project" value="UniProtKB-SubCell"/>
</dbReference>
<dbReference type="PANTHER" id="PTHR35902:SF3">
    <property type="entry name" value="NPCBM-ASSOCIATED, NEW3 DOMAIN OF ALPHA-GALACTOSIDASE"/>
    <property type="match status" value="1"/>
</dbReference>
<dbReference type="PANTHER" id="PTHR35902">
    <property type="entry name" value="S-LAYER DOMAIN-LIKE PROTEIN-RELATED"/>
    <property type="match status" value="1"/>
</dbReference>
<sequence>MLYILKCKSNYIINFHRLPQKTSKALYTNISLSFIYRFMWGIMMKKLLIILIGFILLSSISAIQIDAPQYQPNVIHPGDDVDLWIKINNDNYDNEVKNIVVEVTPHYPFELRQVNPIKGKATISHLNPGESDTVYFKLHVDENAPSRDYRIDVKVSYDEVDKEDGKETSHHYEITKIYYLHVYGIASFEINIDDTSIIPGKTKTIKLDIKNVGTGNAKYLNLYLIGNDKINILGGSLIFVGCLKANNQYIIPIKIYAVPEIEDGIYSINANLFWVGEDGKQYNSTIPLNIRVVKKIYANQPYIYLDDVKNKGDYIEITIGIANRGTTKIKHCVMTLTANGRNYTKYIGDLDEDDYDTSIFEIKEFGDIPIKVTVTYFDDYHNPYNATETFNIHVEKVKKEESLSPMYIIGGVIVVIIIILYIRKRKRHQEFEEFEEI</sequence>
<organism>
    <name type="scientific">Methanocaldococcus jannaschii (strain ATCC 43067 / DSM 2661 / JAL-1 / JCM 10045 / NBRC 100440)</name>
    <name type="common">Methanococcus jannaschii</name>
    <dbReference type="NCBI Taxonomy" id="243232"/>
    <lineage>
        <taxon>Archaea</taxon>
        <taxon>Methanobacteriati</taxon>
        <taxon>Methanobacteriota</taxon>
        <taxon>Methanomada group</taxon>
        <taxon>Methanococci</taxon>
        <taxon>Methanococcales</taxon>
        <taxon>Methanocaldococcaceae</taxon>
        <taxon>Methanocaldococcus</taxon>
    </lineage>
</organism>